<comment type="function">
    <text evidence="1">Catalyzes the reductive methylation of 2'-deoxyuridine-5'-monophosphate (dUMP) to 2'-deoxythymidine-5'-monophosphate (dTMP) while utilizing 5,10-methylenetetrahydrofolate (mTHF) as the methyl donor and reductant in the reaction, yielding dihydrofolate (DHF) as a by-product. This enzymatic reaction provides an intracellular de novo source of dTMP, an essential precursor for DNA biosynthesis.</text>
</comment>
<comment type="catalytic activity">
    <reaction evidence="1">
        <text>dUMP + (6R)-5,10-methylene-5,6,7,8-tetrahydrofolate = 7,8-dihydrofolate + dTMP</text>
        <dbReference type="Rhea" id="RHEA:12104"/>
        <dbReference type="ChEBI" id="CHEBI:15636"/>
        <dbReference type="ChEBI" id="CHEBI:57451"/>
        <dbReference type="ChEBI" id="CHEBI:63528"/>
        <dbReference type="ChEBI" id="CHEBI:246422"/>
        <dbReference type="EC" id="2.1.1.45"/>
    </reaction>
</comment>
<comment type="pathway">
    <text evidence="1">Pyrimidine metabolism; dTTP biosynthesis.</text>
</comment>
<comment type="subunit">
    <text evidence="1">Homodimer.</text>
</comment>
<comment type="subcellular location">
    <subcellularLocation>
        <location evidence="1">Cytoplasm</location>
    </subcellularLocation>
</comment>
<comment type="similarity">
    <text evidence="1">Belongs to the thymidylate synthase family. Bacterial-type ThyA subfamily.</text>
</comment>
<evidence type="ECO:0000255" key="1">
    <source>
        <dbReference type="HAMAP-Rule" id="MF_00008"/>
    </source>
</evidence>
<proteinExistence type="inferred from homology"/>
<accession>Q6FZ91</accession>
<reference key="1">
    <citation type="journal article" date="2004" name="Proc. Natl. Acad. Sci. U.S.A.">
        <title>The louse-borne human pathogen Bartonella quintana is a genomic derivative of the zoonotic agent Bartonella henselae.</title>
        <authorList>
            <person name="Alsmark U.C.M."/>
            <person name="Frank A.C."/>
            <person name="Karlberg E.O."/>
            <person name="Legault B.-A."/>
            <person name="Ardell D.H."/>
            <person name="Canbaeck B."/>
            <person name="Eriksson A.-S."/>
            <person name="Naeslund A.K."/>
            <person name="Handley S.A."/>
            <person name="Huvet M."/>
            <person name="La Scola B."/>
            <person name="Holmberg M."/>
            <person name="Andersson S.G.E."/>
        </authorList>
    </citation>
    <scope>NUCLEOTIDE SEQUENCE [LARGE SCALE GENOMIC DNA]</scope>
    <source>
        <strain>Toulouse</strain>
    </source>
</reference>
<organism>
    <name type="scientific">Bartonella quintana (strain Toulouse)</name>
    <name type="common">Rochalimaea quintana</name>
    <dbReference type="NCBI Taxonomy" id="283165"/>
    <lineage>
        <taxon>Bacteria</taxon>
        <taxon>Pseudomonadati</taxon>
        <taxon>Pseudomonadota</taxon>
        <taxon>Alphaproteobacteria</taxon>
        <taxon>Hyphomicrobiales</taxon>
        <taxon>Bartonellaceae</taxon>
        <taxon>Bartonella</taxon>
    </lineage>
</organism>
<gene>
    <name evidence="1" type="primary">thyA</name>
    <name type="ordered locus">BQ08630</name>
</gene>
<keyword id="KW-0963">Cytoplasm</keyword>
<keyword id="KW-0489">Methyltransferase</keyword>
<keyword id="KW-0545">Nucleotide biosynthesis</keyword>
<keyword id="KW-0808">Transferase</keyword>
<feature type="chain" id="PRO_0000140935" description="Thymidylate synthase">
    <location>
        <begin position="1"/>
        <end position="264"/>
    </location>
</feature>
<feature type="active site" description="Nucleophile" evidence="1">
    <location>
        <position position="146"/>
    </location>
</feature>
<feature type="binding site" description="in other chain" evidence="1">
    <location>
        <position position="21"/>
    </location>
    <ligand>
        <name>dUMP</name>
        <dbReference type="ChEBI" id="CHEBI:246422"/>
        <note>ligand shared between dimeric partners</note>
    </ligand>
</feature>
<feature type="binding site" evidence="1">
    <location>
        <position position="51"/>
    </location>
    <ligand>
        <name>(6R)-5,10-methylene-5,6,7,8-tetrahydrofolate</name>
        <dbReference type="ChEBI" id="CHEBI:15636"/>
    </ligand>
</feature>
<feature type="binding site" evidence="1">
    <location>
        <begin position="126"/>
        <end position="127"/>
    </location>
    <ligand>
        <name>dUMP</name>
        <dbReference type="ChEBI" id="CHEBI:246422"/>
        <note>ligand shared between dimeric partners</note>
    </ligand>
</feature>
<feature type="binding site" description="in other chain" evidence="1">
    <location>
        <begin position="166"/>
        <end position="169"/>
    </location>
    <ligand>
        <name>dUMP</name>
        <dbReference type="ChEBI" id="CHEBI:246422"/>
        <note>ligand shared between dimeric partners</note>
    </ligand>
</feature>
<feature type="binding site" evidence="1">
    <location>
        <position position="169"/>
    </location>
    <ligand>
        <name>(6R)-5,10-methylene-5,6,7,8-tetrahydrofolate</name>
        <dbReference type="ChEBI" id="CHEBI:15636"/>
    </ligand>
</feature>
<feature type="binding site" description="in other chain" evidence="1">
    <location>
        <position position="177"/>
    </location>
    <ligand>
        <name>dUMP</name>
        <dbReference type="ChEBI" id="CHEBI:246422"/>
        <note>ligand shared between dimeric partners</note>
    </ligand>
</feature>
<feature type="binding site" description="in other chain" evidence="1">
    <location>
        <begin position="207"/>
        <end position="209"/>
    </location>
    <ligand>
        <name>dUMP</name>
        <dbReference type="ChEBI" id="CHEBI:246422"/>
        <note>ligand shared between dimeric partners</note>
    </ligand>
</feature>
<feature type="binding site" evidence="1">
    <location>
        <position position="263"/>
    </location>
    <ligand>
        <name>(6R)-5,10-methylene-5,6,7,8-tetrahydrofolate</name>
        <dbReference type="ChEBI" id="CHEBI:15636"/>
    </ligand>
</feature>
<sequence>MKTYLDLLSHVLNKGIDRTDRTGVGTRSVFGYQMRFDLQIGFPLLTTKKLHLRSIIYELLWFLRGDTNVAWLKEHGVSIWDEWADEKGNLGPIYGYQWRSWPASDGRYIDQISRLLTMIKKTPDSRRLIVSAWNPALIEEMALPPCHCFFQFYVADDKLSCQLYQRSADIFLGVPFNIASYALLTMMIAQVSGLKAGDFIHTLGDAHLYSNHFEQARYQLSRIPNALPSMLINPSVTDLFSFKFEDFELLNYEAQPHIKAPVAV</sequence>
<protein>
    <recommendedName>
        <fullName evidence="1">Thymidylate synthase</fullName>
        <shortName evidence="1">TS</shortName>
        <shortName evidence="1">TSase</shortName>
        <ecNumber evidence="1">2.1.1.45</ecNumber>
    </recommendedName>
</protein>
<name>TYSY_BARQU</name>
<dbReference type="EC" id="2.1.1.45" evidence="1"/>
<dbReference type="EMBL" id="BX897700">
    <property type="protein sequence ID" value="CAF26342.1"/>
    <property type="molecule type" value="Genomic_DNA"/>
</dbReference>
<dbReference type="RefSeq" id="WP_011179583.1">
    <property type="nucleotide sequence ID" value="NC_005955.1"/>
</dbReference>
<dbReference type="SMR" id="Q6FZ91"/>
<dbReference type="KEGG" id="bqu:BQ08630"/>
<dbReference type="eggNOG" id="COG0207">
    <property type="taxonomic scope" value="Bacteria"/>
</dbReference>
<dbReference type="HOGENOM" id="CLU_021669_0_0_5"/>
<dbReference type="OrthoDB" id="9774633at2"/>
<dbReference type="UniPathway" id="UPA00575"/>
<dbReference type="Proteomes" id="UP000000597">
    <property type="component" value="Chromosome"/>
</dbReference>
<dbReference type="GO" id="GO:0005829">
    <property type="term" value="C:cytosol"/>
    <property type="evidence" value="ECO:0007669"/>
    <property type="project" value="TreeGrafter"/>
</dbReference>
<dbReference type="GO" id="GO:0004799">
    <property type="term" value="F:thymidylate synthase activity"/>
    <property type="evidence" value="ECO:0007669"/>
    <property type="project" value="UniProtKB-UniRule"/>
</dbReference>
<dbReference type="GO" id="GO:0006231">
    <property type="term" value="P:dTMP biosynthetic process"/>
    <property type="evidence" value="ECO:0007669"/>
    <property type="project" value="UniProtKB-UniRule"/>
</dbReference>
<dbReference type="GO" id="GO:0006235">
    <property type="term" value="P:dTTP biosynthetic process"/>
    <property type="evidence" value="ECO:0007669"/>
    <property type="project" value="UniProtKB-UniRule"/>
</dbReference>
<dbReference type="GO" id="GO:0032259">
    <property type="term" value="P:methylation"/>
    <property type="evidence" value="ECO:0007669"/>
    <property type="project" value="UniProtKB-KW"/>
</dbReference>
<dbReference type="CDD" id="cd00351">
    <property type="entry name" value="TS_Pyrimidine_HMase"/>
    <property type="match status" value="1"/>
</dbReference>
<dbReference type="FunFam" id="3.30.572.10:FF:000001">
    <property type="entry name" value="Thymidylate synthase"/>
    <property type="match status" value="1"/>
</dbReference>
<dbReference type="Gene3D" id="3.30.572.10">
    <property type="entry name" value="Thymidylate synthase/dCMP hydroxymethylase domain"/>
    <property type="match status" value="1"/>
</dbReference>
<dbReference type="HAMAP" id="MF_00008">
    <property type="entry name" value="Thymidy_synth_bact"/>
    <property type="match status" value="1"/>
</dbReference>
<dbReference type="InterPro" id="IPR045097">
    <property type="entry name" value="Thymidate_synth/dCMP_Mease"/>
</dbReference>
<dbReference type="InterPro" id="IPR023451">
    <property type="entry name" value="Thymidate_synth/dCMP_Mease_dom"/>
</dbReference>
<dbReference type="InterPro" id="IPR036926">
    <property type="entry name" value="Thymidate_synth/dCMP_Mease_sf"/>
</dbReference>
<dbReference type="InterPro" id="IPR000398">
    <property type="entry name" value="Thymidylate_synthase"/>
</dbReference>
<dbReference type="InterPro" id="IPR020940">
    <property type="entry name" value="Thymidylate_synthase_AS"/>
</dbReference>
<dbReference type="NCBIfam" id="NF002497">
    <property type="entry name" value="PRK01827.1-3"/>
    <property type="match status" value="1"/>
</dbReference>
<dbReference type="NCBIfam" id="NF002499">
    <property type="entry name" value="PRK01827.1-5"/>
    <property type="match status" value="1"/>
</dbReference>
<dbReference type="NCBIfam" id="TIGR03284">
    <property type="entry name" value="thym_sym"/>
    <property type="match status" value="2"/>
</dbReference>
<dbReference type="PANTHER" id="PTHR11548:SF9">
    <property type="entry name" value="THYMIDYLATE SYNTHASE"/>
    <property type="match status" value="1"/>
</dbReference>
<dbReference type="PANTHER" id="PTHR11548">
    <property type="entry name" value="THYMIDYLATE SYNTHASE 1"/>
    <property type="match status" value="1"/>
</dbReference>
<dbReference type="Pfam" id="PF00303">
    <property type="entry name" value="Thymidylat_synt"/>
    <property type="match status" value="1"/>
</dbReference>
<dbReference type="PRINTS" id="PR00108">
    <property type="entry name" value="THYMDSNTHASE"/>
</dbReference>
<dbReference type="SUPFAM" id="SSF55831">
    <property type="entry name" value="Thymidylate synthase/dCMP hydroxymethylase"/>
    <property type="match status" value="1"/>
</dbReference>
<dbReference type="PROSITE" id="PS00091">
    <property type="entry name" value="THYMIDYLATE_SYNTHASE"/>
    <property type="match status" value="1"/>
</dbReference>